<gene>
    <name evidence="1" type="primary">infA</name>
    <name type="ordered locus">Cthe_2927</name>
</gene>
<keyword id="KW-0963">Cytoplasm</keyword>
<keyword id="KW-0396">Initiation factor</keyword>
<keyword id="KW-0648">Protein biosynthesis</keyword>
<keyword id="KW-1185">Reference proteome</keyword>
<keyword id="KW-0694">RNA-binding</keyword>
<keyword id="KW-0699">rRNA-binding</keyword>
<organism>
    <name type="scientific">Acetivibrio thermocellus (strain ATCC 27405 / DSM 1237 / JCM 9322 / NBRC 103400 / NCIMB 10682 / NRRL B-4536 / VPI 7372)</name>
    <name type="common">Clostridium thermocellum</name>
    <dbReference type="NCBI Taxonomy" id="203119"/>
    <lineage>
        <taxon>Bacteria</taxon>
        <taxon>Bacillati</taxon>
        <taxon>Bacillota</taxon>
        <taxon>Clostridia</taxon>
        <taxon>Eubacteriales</taxon>
        <taxon>Oscillospiraceae</taxon>
        <taxon>Acetivibrio</taxon>
    </lineage>
</organism>
<accession>A3DJJ6</accession>
<sequence length="72" mass="8177">MSKEDVIEVEGKVVEALPNAMFEVELENGHKVLAHISGKLRMNFIRILPGDKVTVELSPYDLTRGRITWRAK</sequence>
<proteinExistence type="inferred from homology"/>
<name>IF1_ACET2</name>
<feature type="chain" id="PRO_0000338809" description="Translation initiation factor IF-1">
    <location>
        <begin position="1"/>
        <end position="72"/>
    </location>
</feature>
<feature type="domain" description="S1-like" evidence="1">
    <location>
        <begin position="1"/>
        <end position="72"/>
    </location>
</feature>
<comment type="function">
    <text evidence="1">One of the essential components for the initiation of protein synthesis. Stabilizes the binding of IF-2 and IF-3 on the 30S subunit to which N-formylmethionyl-tRNA(fMet) subsequently binds. Helps modulate mRNA selection, yielding the 30S pre-initiation complex (PIC). Upon addition of the 50S ribosomal subunit IF-1, IF-2 and IF-3 are released leaving the mature 70S translation initiation complex.</text>
</comment>
<comment type="subunit">
    <text evidence="1">Component of the 30S ribosomal translation pre-initiation complex which assembles on the 30S ribosome in the order IF-2 and IF-3, IF-1 and N-formylmethionyl-tRNA(fMet); mRNA recruitment can occur at any time during PIC assembly.</text>
</comment>
<comment type="subcellular location">
    <subcellularLocation>
        <location evidence="1">Cytoplasm</location>
    </subcellularLocation>
</comment>
<comment type="similarity">
    <text evidence="1">Belongs to the IF-1 family.</text>
</comment>
<reference key="1">
    <citation type="submission" date="2007-02" db="EMBL/GenBank/DDBJ databases">
        <title>Complete sequence of Clostridium thermocellum ATCC 27405.</title>
        <authorList>
            <consortium name="US DOE Joint Genome Institute"/>
            <person name="Copeland A."/>
            <person name="Lucas S."/>
            <person name="Lapidus A."/>
            <person name="Barry K."/>
            <person name="Detter J.C."/>
            <person name="Glavina del Rio T."/>
            <person name="Hammon N."/>
            <person name="Israni S."/>
            <person name="Dalin E."/>
            <person name="Tice H."/>
            <person name="Pitluck S."/>
            <person name="Chertkov O."/>
            <person name="Brettin T."/>
            <person name="Bruce D."/>
            <person name="Han C."/>
            <person name="Tapia R."/>
            <person name="Gilna P."/>
            <person name="Schmutz J."/>
            <person name="Larimer F."/>
            <person name="Land M."/>
            <person name="Hauser L."/>
            <person name="Kyrpides N."/>
            <person name="Mikhailova N."/>
            <person name="Wu J.H.D."/>
            <person name="Newcomb M."/>
            <person name="Richardson P."/>
        </authorList>
    </citation>
    <scope>NUCLEOTIDE SEQUENCE [LARGE SCALE GENOMIC DNA]</scope>
    <source>
        <strain>ATCC 27405 / DSM 1237 / JCM 9322 / NBRC 103400 / NCIMB 10682 / NRRL B-4536 / VPI 7372</strain>
    </source>
</reference>
<evidence type="ECO:0000255" key="1">
    <source>
        <dbReference type="HAMAP-Rule" id="MF_00075"/>
    </source>
</evidence>
<protein>
    <recommendedName>
        <fullName evidence="1">Translation initiation factor IF-1</fullName>
    </recommendedName>
</protein>
<dbReference type="EMBL" id="CP000568">
    <property type="protein sequence ID" value="ABN54125.1"/>
    <property type="molecule type" value="Genomic_DNA"/>
</dbReference>
<dbReference type="RefSeq" id="WP_003514670.1">
    <property type="nucleotide sequence ID" value="NC_009012.1"/>
</dbReference>
<dbReference type="SMR" id="A3DJJ6"/>
<dbReference type="STRING" id="203119.Cthe_2927"/>
<dbReference type="GeneID" id="35805606"/>
<dbReference type="KEGG" id="cth:Cthe_2927"/>
<dbReference type="eggNOG" id="COG0361">
    <property type="taxonomic scope" value="Bacteria"/>
</dbReference>
<dbReference type="HOGENOM" id="CLU_151267_1_0_9"/>
<dbReference type="OrthoDB" id="9803250at2"/>
<dbReference type="Proteomes" id="UP000002145">
    <property type="component" value="Chromosome"/>
</dbReference>
<dbReference type="GO" id="GO:0005829">
    <property type="term" value="C:cytosol"/>
    <property type="evidence" value="ECO:0007669"/>
    <property type="project" value="TreeGrafter"/>
</dbReference>
<dbReference type="GO" id="GO:0043022">
    <property type="term" value="F:ribosome binding"/>
    <property type="evidence" value="ECO:0007669"/>
    <property type="project" value="UniProtKB-UniRule"/>
</dbReference>
<dbReference type="GO" id="GO:0019843">
    <property type="term" value="F:rRNA binding"/>
    <property type="evidence" value="ECO:0007669"/>
    <property type="project" value="UniProtKB-UniRule"/>
</dbReference>
<dbReference type="GO" id="GO:0003743">
    <property type="term" value="F:translation initiation factor activity"/>
    <property type="evidence" value="ECO:0007669"/>
    <property type="project" value="UniProtKB-UniRule"/>
</dbReference>
<dbReference type="CDD" id="cd04451">
    <property type="entry name" value="S1_IF1"/>
    <property type="match status" value="1"/>
</dbReference>
<dbReference type="FunFam" id="2.40.50.140:FF:000002">
    <property type="entry name" value="Translation initiation factor IF-1"/>
    <property type="match status" value="1"/>
</dbReference>
<dbReference type="Gene3D" id="2.40.50.140">
    <property type="entry name" value="Nucleic acid-binding proteins"/>
    <property type="match status" value="1"/>
</dbReference>
<dbReference type="HAMAP" id="MF_00075">
    <property type="entry name" value="IF_1"/>
    <property type="match status" value="1"/>
</dbReference>
<dbReference type="InterPro" id="IPR012340">
    <property type="entry name" value="NA-bd_OB-fold"/>
</dbReference>
<dbReference type="InterPro" id="IPR006196">
    <property type="entry name" value="RNA-binding_domain_S1_IF1"/>
</dbReference>
<dbReference type="InterPro" id="IPR003029">
    <property type="entry name" value="S1_domain"/>
</dbReference>
<dbReference type="InterPro" id="IPR004368">
    <property type="entry name" value="TIF_IF1"/>
</dbReference>
<dbReference type="NCBIfam" id="TIGR00008">
    <property type="entry name" value="infA"/>
    <property type="match status" value="1"/>
</dbReference>
<dbReference type="PANTHER" id="PTHR33370">
    <property type="entry name" value="TRANSLATION INITIATION FACTOR IF-1, CHLOROPLASTIC"/>
    <property type="match status" value="1"/>
</dbReference>
<dbReference type="PANTHER" id="PTHR33370:SF1">
    <property type="entry name" value="TRANSLATION INITIATION FACTOR IF-1, CHLOROPLASTIC"/>
    <property type="match status" value="1"/>
</dbReference>
<dbReference type="Pfam" id="PF01176">
    <property type="entry name" value="eIF-1a"/>
    <property type="match status" value="1"/>
</dbReference>
<dbReference type="SMART" id="SM00316">
    <property type="entry name" value="S1"/>
    <property type="match status" value="1"/>
</dbReference>
<dbReference type="SUPFAM" id="SSF50249">
    <property type="entry name" value="Nucleic acid-binding proteins"/>
    <property type="match status" value="1"/>
</dbReference>
<dbReference type="PROSITE" id="PS50832">
    <property type="entry name" value="S1_IF1_TYPE"/>
    <property type="match status" value="1"/>
</dbReference>